<accession>A1ATF5</accession>
<keyword id="KW-0067">ATP-binding</keyword>
<keyword id="KW-0418">Kinase</keyword>
<keyword id="KW-0441">Lipid A biosynthesis</keyword>
<keyword id="KW-0444">Lipid biosynthesis</keyword>
<keyword id="KW-0443">Lipid metabolism</keyword>
<keyword id="KW-0547">Nucleotide-binding</keyword>
<keyword id="KW-1185">Reference proteome</keyword>
<keyword id="KW-0808">Transferase</keyword>
<organism>
    <name type="scientific">Pelobacter propionicus (strain DSM 2379 / NBRC 103807 / OttBd1)</name>
    <dbReference type="NCBI Taxonomy" id="338966"/>
    <lineage>
        <taxon>Bacteria</taxon>
        <taxon>Pseudomonadati</taxon>
        <taxon>Thermodesulfobacteriota</taxon>
        <taxon>Desulfuromonadia</taxon>
        <taxon>Desulfuromonadales</taxon>
        <taxon>Desulfuromonadaceae</taxon>
        <taxon>Pelobacter</taxon>
    </lineage>
</organism>
<reference key="1">
    <citation type="submission" date="2006-10" db="EMBL/GenBank/DDBJ databases">
        <title>Complete sequence of chromosome of Pelobacter propionicus DSM 2379.</title>
        <authorList>
            <consortium name="US DOE Joint Genome Institute"/>
            <person name="Copeland A."/>
            <person name="Lucas S."/>
            <person name="Lapidus A."/>
            <person name="Barry K."/>
            <person name="Detter J.C."/>
            <person name="Glavina del Rio T."/>
            <person name="Hammon N."/>
            <person name="Israni S."/>
            <person name="Dalin E."/>
            <person name="Tice H."/>
            <person name="Pitluck S."/>
            <person name="Saunders E."/>
            <person name="Brettin T."/>
            <person name="Bruce D."/>
            <person name="Han C."/>
            <person name="Tapia R."/>
            <person name="Schmutz J."/>
            <person name="Larimer F."/>
            <person name="Land M."/>
            <person name="Hauser L."/>
            <person name="Kyrpides N."/>
            <person name="Kim E."/>
            <person name="Lovley D."/>
            <person name="Richardson P."/>
        </authorList>
    </citation>
    <scope>NUCLEOTIDE SEQUENCE [LARGE SCALE GENOMIC DNA]</scope>
    <source>
        <strain>DSM 2379 / NBRC 103807 / OttBd1</strain>
    </source>
</reference>
<gene>
    <name evidence="1" type="primary">lpxK</name>
    <name type="ordered locus">Ppro_3028</name>
</gene>
<proteinExistence type="inferred from homology"/>
<name>LPXK_PELPD</name>
<protein>
    <recommendedName>
        <fullName evidence="1">Tetraacyldisaccharide 4'-kinase</fullName>
        <ecNumber evidence="1">2.7.1.130</ecNumber>
    </recommendedName>
    <alternativeName>
        <fullName evidence="1">Lipid A 4'-kinase</fullName>
    </alternativeName>
</protein>
<evidence type="ECO:0000255" key="1">
    <source>
        <dbReference type="HAMAP-Rule" id="MF_00409"/>
    </source>
</evidence>
<feature type="chain" id="PRO_0000291221" description="Tetraacyldisaccharide 4'-kinase">
    <location>
        <begin position="1"/>
        <end position="361"/>
    </location>
</feature>
<feature type="binding site" evidence="1">
    <location>
        <begin position="68"/>
        <end position="75"/>
    </location>
    <ligand>
        <name>ATP</name>
        <dbReference type="ChEBI" id="CHEBI:30616"/>
    </ligand>
</feature>
<comment type="function">
    <text evidence="1">Transfers the gamma-phosphate of ATP to the 4'-position of a tetraacyldisaccharide 1-phosphate intermediate (termed DS-1-P) to form tetraacyldisaccharide 1,4'-bis-phosphate (lipid IVA).</text>
</comment>
<comment type="catalytic activity">
    <reaction evidence="1">
        <text>a lipid A disaccharide + ATP = a lipid IVA + ADP + H(+)</text>
        <dbReference type="Rhea" id="RHEA:67840"/>
        <dbReference type="ChEBI" id="CHEBI:15378"/>
        <dbReference type="ChEBI" id="CHEBI:30616"/>
        <dbReference type="ChEBI" id="CHEBI:176343"/>
        <dbReference type="ChEBI" id="CHEBI:176425"/>
        <dbReference type="ChEBI" id="CHEBI:456216"/>
        <dbReference type="EC" id="2.7.1.130"/>
    </reaction>
</comment>
<comment type="pathway">
    <text evidence="1">Glycolipid biosynthesis; lipid IV(A) biosynthesis; lipid IV(A) from (3R)-3-hydroxytetradecanoyl-[acyl-carrier-protein] and UDP-N-acetyl-alpha-D-glucosamine: step 6/6.</text>
</comment>
<comment type="similarity">
    <text evidence="1">Belongs to the LpxK family.</text>
</comment>
<dbReference type="EC" id="2.7.1.130" evidence="1"/>
<dbReference type="EMBL" id="CP000482">
    <property type="protein sequence ID" value="ABL00626.1"/>
    <property type="molecule type" value="Genomic_DNA"/>
</dbReference>
<dbReference type="RefSeq" id="WP_011736861.1">
    <property type="nucleotide sequence ID" value="NC_008609.1"/>
</dbReference>
<dbReference type="SMR" id="A1ATF5"/>
<dbReference type="STRING" id="338966.Ppro_3028"/>
<dbReference type="KEGG" id="ppd:Ppro_3028"/>
<dbReference type="eggNOG" id="COG1663">
    <property type="taxonomic scope" value="Bacteria"/>
</dbReference>
<dbReference type="HOGENOM" id="CLU_038816_2_0_7"/>
<dbReference type="OrthoDB" id="9766423at2"/>
<dbReference type="UniPathway" id="UPA00359">
    <property type="reaction ID" value="UER00482"/>
</dbReference>
<dbReference type="Proteomes" id="UP000006732">
    <property type="component" value="Chromosome"/>
</dbReference>
<dbReference type="GO" id="GO:0005886">
    <property type="term" value="C:plasma membrane"/>
    <property type="evidence" value="ECO:0007669"/>
    <property type="project" value="TreeGrafter"/>
</dbReference>
<dbReference type="GO" id="GO:0005524">
    <property type="term" value="F:ATP binding"/>
    <property type="evidence" value="ECO:0007669"/>
    <property type="project" value="UniProtKB-UniRule"/>
</dbReference>
<dbReference type="GO" id="GO:0009029">
    <property type="term" value="F:tetraacyldisaccharide 4'-kinase activity"/>
    <property type="evidence" value="ECO:0007669"/>
    <property type="project" value="UniProtKB-UniRule"/>
</dbReference>
<dbReference type="GO" id="GO:0009245">
    <property type="term" value="P:lipid A biosynthetic process"/>
    <property type="evidence" value="ECO:0007669"/>
    <property type="project" value="UniProtKB-UniRule"/>
</dbReference>
<dbReference type="GO" id="GO:0009244">
    <property type="term" value="P:lipopolysaccharide core region biosynthetic process"/>
    <property type="evidence" value="ECO:0007669"/>
    <property type="project" value="TreeGrafter"/>
</dbReference>
<dbReference type="HAMAP" id="MF_00409">
    <property type="entry name" value="LpxK"/>
    <property type="match status" value="1"/>
</dbReference>
<dbReference type="InterPro" id="IPR003758">
    <property type="entry name" value="LpxK"/>
</dbReference>
<dbReference type="InterPro" id="IPR027417">
    <property type="entry name" value="P-loop_NTPase"/>
</dbReference>
<dbReference type="NCBIfam" id="TIGR00682">
    <property type="entry name" value="lpxK"/>
    <property type="match status" value="1"/>
</dbReference>
<dbReference type="PANTHER" id="PTHR42724">
    <property type="entry name" value="TETRAACYLDISACCHARIDE 4'-KINASE"/>
    <property type="match status" value="1"/>
</dbReference>
<dbReference type="PANTHER" id="PTHR42724:SF1">
    <property type="entry name" value="TETRAACYLDISACCHARIDE 4'-KINASE, MITOCHONDRIAL-RELATED"/>
    <property type="match status" value="1"/>
</dbReference>
<dbReference type="Pfam" id="PF02606">
    <property type="entry name" value="LpxK"/>
    <property type="match status" value="1"/>
</dbReference>
<dbReference type="SUPFAM" id="SSF52540">
    <property type="entry name" value="P-loop containing nucleoside triphosphate hydrolases"/>
    <property type="match status" value="1"/>
</dbReference>
<sequence>MNSSLATYWRALASGTRRSLPDRSLLSLLVPFSLLYALIQRLRAVLYRVRLLKSRRLPRPVISVGNLTVGGTGKTPVTAHIARWLLAEGYRVAVLSRGYGGSLEGHTAVVSDGRTVMMEAEQCGDEPFLLSSTIPGLMVVMGSDRFSAGMLAMEQLAPDVFLLDDGYQHLRLTRDLNILLLDHALPFGNGWTLPAGVLREPTSAAGRADLVIRTRCPRIAPCPSPLPGIPSCTARHSLGNVIPLGNGAAFPMESLRGRRVLAFAGIADPYGFFEELREQGLNLVAELAMPDHVAYDDNRIAEIGRRLHGSGAEFAVTTEKDGVKLLGLQRECAEKILLARLELIIADPAPLTDALRNLLQK</sequence>